<evidence type="ECO:0000250" key="1">
    <source>
        <dbReference type="UniProtKB" id="Q12510"/>
    </source>
</evidence>
<evidence type="ECO:0000255" key="2"/>
<evidence type="ECO:0000256" key="3">
    <source>
        <dbReference type="SAM" id="MobiDB-lite"/>
    </source>
</evidence>
<evidence type="ECO:0000305" key="4"/>
<name>CMR1_COCIM</name>
<accession>Q1E6Q0</accession>
<accession>J3KK89</accession>
<reference key="1">
    <citation type="journal article" date="2009" name="Genome Res.">
        <title>Comparative genomic analyses of the human fungal pathogens Coccidioides and their relatives.</title>
        <authorList>
            <person name="Sharpton T.J."/>
            <person name="Stajich J.E."/>
            <person name="Rounsley S.D."/>
            <person name="Gardner M.J."/>
            <person name="Wortman J.R."/>
            <person name="Jordar V.S."/>
            <person name="Maiti R."/>
            <person name="Kodira C.D."/>
            <person name="Neafsey D.E."/>
            <person name="Zeng Q."/>
            <person name="Hung C.-Y."/>
            <person name="McMahan C."/>
            <person name="Muszewska A."/>
            <person name="Grynberg M."/>
            <person name="Mandel M.A."/>
            <person name="Kellner E.M."/>
            <person name="Barker B.M."/>
            <person name="Galgiani J.N."/>
            <person name="Orbach M.J."/>
            <person name="Kirkland T.N."/>
            <person name="Cole G.T."/>
            <person name="Henn M.R."/>
            <person name="Birren B.W."/>
            <person name="Taylor J.W."/>
        </authorList>
    </citation>
    <scope>NUCLEOTIDE SEQUENCE [LARGE SCALE GENOMIC DNA]</scope>
    <source>
        <strain>RS</strain>
    </source>
</reference>
<reference key="2">
    <citation type="journal article" date="2010" name="Genome Res.">
        <title>Population genomic sequencing of Coccidioides fungi reveals recent hybridization and transposon control.</title>
        <authorList>
            <person name="Neafsey D.E."/>
            <person name="Barker B.M."/>
            <person name="Sharpton T.J."/>
            <person name="Stajich J.E."/>
            <person name="Park D.J."/>
            <person name="Whiston E."/>
            <person name="Hung C.-Y."/>
            <person name="McMahan C."/>
            <person name="White J."/>
            <person name="Sykes S."/>
            <person name="Heiman D."/>
            <person name="Young S."/>
            <person name="Zeng Q."/>
            <person name="Abouelleil A."/>
            <person name="Aftuck L."/>
            <person name="Bessette D."/>
            <person name="Brown A."/>
            <person name="FitzGerald M."/>
            <person name="Lui A."/>
            <person name="Macdonald J.P."/>
            <person name="Priest M."/>
            <person name="Orbach M.J."/>
            <person name="Galgiani J.N."/>
            <person name="Kirkland T.N."/>
            <person name="Cole G.T."/>
            <person name="Birren B.W."/>
            <person name="Henn M.R."/>
            <person name="Taylor J.W."/>
            <person name="Rounsley S.D."/>
        </authorList>
    </citation>
    <scope>GENOME REANNOTATION</scope>
    <source>
        <strain>RS</strain>
    </source>
</reference>
<organism>
    <name type="scientific">Coccidioides immitis (strain RS)</name>
    <name type="common">Valley fever fungus</name>
    <dbReference type="NCBI Taxonomy" id="246410"/>
    <lineage>
        <taxon>Eukaryota</taxon>
        <taxon>Fungi</taxon>
        <taxon>Dikarya</taxon>
        <taxon>Ascomycota</taxon>
        <taxon>Pezizomycotina</taxon>
        <taxon>Eurotiomycetes</taxon>
        <taxon>Eurotiomycetidae</taxon>
        <taxon>Onygenales</taxon>
        <taxon>Onygenaceae</taxon>
        <taxon>Coccidioides</taxon>
    </lineage>
</organism>
<feature type="chain" id="PRO_0000351105" description="DNA damage-binding protein CMR1">
    <location>
        <begin position="1"/>
        <end position="525"/>
    </location>
</feature>
<feature type="repeat" description="WD 1" evidence="2">
    <location>
        <begin position="183"/>
        <end position="224"/>
    </location>
</feature>
<feature type="repeat" description="WD 2" evidence="2">
    <location>
        <begin position="241"/>
        <end position="281"/>
    </location>
</feature>
<feature type="repeat" description="WD 3" evidence="2">
    <location>
        <begin position="288"/>
        <end position="328"/>
    </location>
</feature>
<feature type="repeat" description="WD 4" evidence="2">
    <location>
        <begin position="339"/>
        <end position="379"/>
    </location>
</feature>
<feature type="repeat" description="WD 5" evidence="2">
    <location>
        <begin position="384"/>
        <end position="425"/>
    </location>
</feature>
<feature type="repeat" description="WD 6" evidence="2">
    <location>
        <begin position="448"/>
        <end position="491"/>
    </location>
</feature>
<feature type="repeat" description="WD 7" evidence="2">
    <location>
        <begin position="494"/>
        <end position="525"/>
    </location>
</feature>
<feature type="region of interest" description="Disordered" evidence="3">
    <location>
        <begin position="38"/>
        <end position="86"/>
    </location>
</feature>
<feature type="region of interest" description="Disordered" evidence="3">
    <location>
        <begin position="212"/>
        <end position="233"/>
    </location>
</feature>
<feature type="compositionally biased region" description="Basic residues" evidence="3">
    <location>
        <begin position="53"/>
        <end position="62"/>
    </location>
</feature>
<feature type="compositionally biased region" description="Acidic residues" evidence="3">
    <location>
        <begin position="223"/>
        <end position="232"/>
    </location>
</feature>
<protein>
    <recommendedName>
        <fullName evidence="1">DNA damage-binding protein CMR1</fullName>
    </recommendedName>
</protein>
<proteinExistence type="inferred from homology"/>
<comment type="function">
    <text evidence="1">DNA-binding protein that binds to both single- and double-stranded DNA. Binds preferentially to UV-damaged DNA. May be involved in DNA-metabolic processes.</text>
</comment>
<comment type="similarity">
    <text evidence="4">Belongs to the WD repeat DDB2/WDR76 family.</text>
</comment>
<sequence length="525" mass="58455">MPRTKEEPELSEFEKQRAANIAERDALLKKLTLEAQSAGIFSKPPASKSSSQTKKKPAPKRVKKEDEPPVPRRMSSRLRGLAAESEIAKRKAEDEYQAMKAAAQAKRMRISGDLNVGDIVVGENKWNETGLQGLGIVNSAQRYQRTFGEEDIKKTTNKELKELREKMSGLQLWEPWEPNRIKITRERIYSMLFHPTESKPLIFAGDKTGHLGILDASQQPDQNESDEEDEYPDPTITTIKPHTNTISAMHIHPSDPSKLYSGSYDSSIRALDLEKSVATEAYAPASSSDDEPLSGIDMAPTDPHVLYFTTLDGFFGRHDMRVSSKANPGDGSAVTFYQLSEKKIGGFSLCPTQPHYMATASLDRTMKVWDLRHLSTKHPKPVGEHESSLSVSHAAFNQKGQIATTSYDNSIKIYDLASKGLKDWKPNHTLSEDEMAPDAVIRHNCQTGKWVTILRPQWQACPDSPVERFCIGNMNRFVDIYTSTGEQLAQLGADVITAVPAVAVFHRTQNWVVGGTGSAKVCLWM</sequence>
<keyword id="KW-0227">DNA damage</keyword>
<keyword id="KW-0238">DNA-binding</keyword>
<keyword id="KW-1185">Reference proteome</keyword>
<keyword id="KW-0677">Repeat</keyword>
<keyword id="KW-0853">WD repeat</keyword>
<gene>
    <name type="ORF">CIMG_01763</name>
</gene>
<dbReference type="EMBL" id="GG704911">
    <property type="protein sequence ID" value="EAS36409.3"/>
    <property type="molecule type" value="Genomic_DNA"/>
</dbReference>
<dbReference type="RefSeq" id="XP_001247992.1">
    <property type="nucleotide sequence ID" value="XM_001247991.2"/>
</dbReference>
<dbReference type="SMR" id="Q1E6Q0"/>
<dbReference type="FunCoup" id="Q1E6Q0">
    <property type="interactions" value="647"/>
</dbReference>
<dbReference type="STRING" id="246410.Q1E6Q0"/>
<dbReference type="GeneID" id="4566785"/>
<dbReference type="KEGG" id="cim:CIMG_01763"/>
<dbReference type="VEuPathDB" id="FungiDB:CIMG_01763"/>
<dbReference type="InParanoid" id="Q1E6Q0"/>
<dbReference type="OMA" id="DPNTLYW"/>
<dbReference type="OrthoDB" id="9890280at2759"/>
<dbReference type="Proteomes" id="UP000001261">
    <property type="component" value="Unassembled WGS sequence"/>
</dbReference>
<dbReference type="GO" id="GO:0005634">
    <property type="term" value="C:nucleus"/>
    <property type="evidence" value="ECO:0007669"/>
    <property type="project" value="TreeGrafter"/>
</dbReference>
<dbReference type="GO" id="GO:0003677">
    <property type="term" value="F:DNA binding"/>
    <property type="evidence" value="ECO:0007669"/>
    <property type="project" value="UniProtKB-KW"/>
</dbReference>
<dbReference type="GO" id="GO:0006974">
    <property type="term" value="P:DNA damage response"/>
    <property type="evidence" value="ECO:0007669"/>
    <property type="project" value="UniProtKB-KW"/>
</dbReference>
<dbReference type="GO" id="GO:2000001">
    <property type="term" value="P:regulation of DNA damage checkpoint"/>
    <property type="evidence" value="ECO:0007669"/>
    <property type="project" value="TreeGrafter"/>
</dbReference>
<dbReference type="FunFam" id="2.130.10.10:FF:000562">
    <property type="entry name" value="DNA damage-binding protein CMR1"/>
    <property type="match status" value="1"/>
</dbReference>
<dbReference type="Gene3D" id="2.130.10.10">
    <property type="entry name" value="YVTN repeat-like/Quinoprotein amine dehydrogenase"/>
    <property type="match status" value="1"/>
</dbReference>
<dbReference type="InterPro" id="IPR015943">
    <property type="entry name" value="WD40/YVTN_repeat-like_dom_sf"/>
</dbReference>
<dbReference type="InterPro" id="IPR019775">
    <property type="entry name" value="WD40_repeat_CS"/>
</dbReference>
<dbReference type="InterPro" id="IPR036322">
    <property type="entry name" value="WD40_repeat_dom_sf"/>
</dbReference>
<dbReference type="InterPro" id="IPR001680">
    <property type="entry name" value="WD40_rpt"/>
</dbReference>
<dbReference type="InterPro" id="IPR050853">
    <property type="entry name" value="WD_repeat_DNA-damage-binding"/>
</dbReference>
<dbReference type="PANTHER" id="PTHR14773">
    <property type="entry name" value="WD REPEAT-CONTAINING PROTEIN 76"/>
    <property type="match status" value="1"/>
</dbReference>
<dbReference type="PANTHER" id="PTHR14773:SF0">
    <property type="entry name" value="WD REPEAT-CONTAINING PROTEIN 76"/>
    <property type="match status" value="1"/>
</dbReference>
<dbReference type="Pfam" id="PF00400">
    <property type="entry name" value="WD40"/>
    <property type="match status" value="3"/>
</dbReference>
<dbReference type="SMART" id="SM00320">
    <property type="entry name" value="WD40"/>
    <property type="match status" value="4"/>
</dbReference>
<dbReference type="SUPFAM" id="SSF50978">
    <property type="entry name" value="WD40 repeat-like"/>
    <property type="match status" value="1"/>
</dbReference>
<dbReference type="PROSITE" id="PS00678">
    <property type="entry name" value="WD_REPEATS_1"/>
    <property type="match status" value="1"/>
</dbReference>
<dbReference type="PROSITE" id="PS50082">
    <property type="entry name" value="WD_REPEATS_2"/>
    <property type="match status" value="1"/>
</dbReference>
<dbReference type="PROSITE" id="PS50294">
    <property type="entry name" value="WD_REPEATS_REGION"/>
    <property type="match status" value="1"/>
</dbReference>